<evidence type="ECO:0000255" key="1">
    <source>
        <dbReference type="HAMAP-Rule" id="MF_00734"/>
    </source>
</evidence>
<sequence length="326" mass="36595">MSKSNQKIASIEQLSNNEGIISALAFDQRGALKRMMAKHQTEEPTVAQIEQLKVLVAEELTQYASSILLDPEYGLPASDARNKDCGLLLAYEKTGYDVNAKGRLPDCLVEWSAKRLKEQGANAVKFLLYYDVDDAEEINIQKKAYIERIGSECVAEDIPFFLEVLTYDDNIPDNGSVEFAKVKPRKVNEAMKLFSEPRFNVDVLKVEVPVNMKYVEGFAEGEVVYTKEEAAQHFKDQDAATHLPYIYLSAGVSAELFQETLKFAHEAGAKFNGVLCGRATWSGAVQVYIEQGEDAAREWLRTTGFKNIDDLNKVLKDTATSWKQRK</sequence>
<feature type="chain" id="PRO_1000083343" description="Tagatose 1,6-diphosphate aldolase">
    <location>
        <begin position="1"/>
        <end position="326"/>
    </location>
</feature>
<protein>
    <recommendedName>
        <fullName evidence="1">Tagatose 1,6-diphosphate aldolase</fullName>
        <ecNumber evidence="1">4.1.2.40</ecNumber>
    </recommendedName>
    <alternativeName>
        <fullName evidence="1">D-tagatose-1,6-bisphosphate aldolase</fullName>
    </alternativeName>
    <alternativeName>
        <fullName evidence="1">Tagatose-bisphosphate aldolase</fullName>
    </alternativeName>
</protein>
<organism>
    <name type="scientific">Staphylococcus aureus (strain JH1)</name>
    <dbReference type="NCBI Taxonomy" id="359787"/>
    <lineage>
        <taxon>Bacteria</taxon>
        <taxon>Bacillati</taxon>
        <taxon>Bacillota</taxon>
        <taxon>Bacilli</taxon>
        <taxon>Bacillales</taxon>
        <taxon>Staphylococcaceae</taxon>
        <taxon>Staphylococcus</taxon>
    </lineage>
</organism>
<accession>A6U3S2</accession>
<name>LACD_STAA2</name>
<gene>
    <name evidence="1" type="primary">lacD</name>
    <name type="ordered locus">SaurJH1_2262</name>
</gene>
<reference key="1">
    <citation type="submission" date="2007-06" db="EMBL/GenBank/DDBJ databases">
        <title>Complete sequence of chromosome of Staphylococcus aureus subsp. aureus JH1.</title>
        <authorList>
            <consortium name="US DOE Joint Genome Institute"/>
            <person name="Copeland A."/>
            <person name="Lucas S."/>
            <person name="Lapidus A."/>
            <person name="Barry K."/>
            <person name="Detter J.C."/>
            <person name="Glavina del Rio T."/>
            <person name="Hammon N."/>
            <person name="Israni S."/>
            <person name="Dalin E."/>
            <person name="Tice H."/>
            <person name="Pitluck S."/>
            <person name="Chain P."/>
            <person name="Malfatti S."/>
            <person name="Shin M."/>
            <person name="Vergez L."/>
            <person name="Schmutz J."/>
            <person name="Larimer F."/>
            <person name="Land M."/>
            <person name="Hauser L."/>
            <person name="Kyrpides N."/>
            <person name="Ivanova N."/>
            <person name="Tomasz A."/>
            <person name="Richardson P."/>
        </authorList>
    </citation>
    <scope>NUCLEOTIDE SEQUENCE [LARGE SCALE GENOMIC DNA]</scope>
    <source>
        <strain>JH1</strain>
    </source>
</reference>
<dbReference type="EC" id="4.1.2.40" evidence="1"/>
<dbReference type="EMBL" id="CP000736">
    <property type="protein sequence ID" value="ABR53090.1"/>
    <property type="molecule type" value="Genomic_DNA"/>
</dbReference>
<dbReference type="SMR" id="A6U3S2"/>
<dbReference type="KEGG" id="sah:SaurJH1_2262"/>
<dbReference type="HOGENOM" id="CLU_058971_0_1_9"/>
<dbReference type="UniPathway" id="UPA00704">
    <property type="reaction ID" value="UER00716"/>
</dbReference>
<dbReference type="GO" id="GO:0061595">
    <property type="term" value="F:6-deoxy-6-sulfofructose-1-phosphate aldolase activity"/>
    <property type="evidence" value="ECO:0007669"/>
    <property type="project" value="TreeGrafter"/>
</dbReference>
<dbReference type="GO" id="GO:0009024">
    <property type="term" value="F:tagatose-6-phosphate kinase activity"/>
    <property type="evidence" value="ECO:0007669"/>
    <property type="project" value="InterPro"/>
</dbReference>
<dbReference type="GO" id="GO:0009025">
    <property type="term" value="F:tagatose-bisphosphate aldolase activity"/>
    <property type="evidence" value="ECO:0007669"/>
    <property type="project" value="UniProtKB-UniRule"/>
</dbReference>
<dbReference type="GO" id="GO:1902777">
    <property type="term" value="P:6-sulfoquinovose(1-) catabolic process"/>
    <property type="evidence" value="ECO:0007669"/>
    <property type="project" value="TreeGrafter"/>
</dbReference>
<dbReference type="GO" id="GO:2001059">
    <property type="term" value="P:D-tagatose 6-phosphate catabolic process"/>
    <property type="evidence" value="ECO:0007669"/>
    <property type="project" value="UniProtKB-UniRule"/>
</dbReference>
<dbReference type="GO" id="GO:0019512">
    <property type="term" value="P:lactose catabolic process via tagatose-6-phosphate"/>
    <property type="evidence" value="ECO:0007669"/>
    <property type="project" value="InterPro"/>
</dbReference>
<dbReference type="FunFam" id="3.20.20.70:FF:000137">
    <property type="entry name" value="Tagatose 1,6-diphosphate aldolase 2"/>
    <property type="match status" value="1"/>
</dbReference>
<dbReference type="Gene3D" id="3.20.20.70">
    <property type="entry name" value="Aldolase class I"/>
    <property type="match status" value="1"/>
</dbReference>
<dbReference type="HAMAP" id="MF_00734">
    <property type="entry name" value="LacD"/>
    <property type="match status" value="1"/>
</dbReference>
<dbReference type="InterPro" id="IPR013785">
    <property type="entry name" value="Aldolase_TIM"/>
</dbReference>
<dbReference type="InterPro" id="IPR002915">
    <property type="entry name" value="DeoC/FbaB/LacD_aldolase"/>
</dbReference>
<dbReference type="InterPro" id="IPR050552">
    <property type="entry name" value="LacD_aldolase"/>
</dbReference>
<dbReference type="InterPro" id="IPR005927">
    <property type="entry name" value="Tag_1.6-dipho_adolase"/>
</dbReference>
<dbReference type="NCBIfam" id="TIGR01232">
    <property type="entry name" value="lacD"/>
    <property type="match status" value="1"/>
</dbReference>
<dbReference type="NCBIfam" id="NF003180">
    <property type="entry name" value="PRK04161.1"/>
    <property type="match status" value="1"/>
</dbReference>
<dbReference type="NCBIfam" id="NF009065">
    <property type="entry name" value="PRK12399.1"/>
    <property type="match status" value="1"/>
</dbReference>
<dbReference type="NCBIfam" id="NF009498">
    <property type="entry name" value="PRK12858.1"/>
    <property type="match status" value="1"/>
</dbReference>
<dbReference type="PANTHER" id="PTHR39340">
    <property type="entry name" value="SULFOFRUCTOSEPHOSPHATE ALDOLASE"/>
    <property type="match status" value="1"/>
</dbReference>
<dbReference type="PANTHER" id="PTHR39340:SF1">
    <property type="entry name" value="SULFOFRUCTOSEPHOSPHATE ALDOLASE"/>
    <property type="match status" value="1"/>
</dbReference>
<dbReference type="Pfam" id="PF01791">
    <property type="entry name" value="DeoC"/>
    <property type="match status" value="1"/>
</dbReference>
<dbReference type="SMART" id="SM01133">
    <property type="entry name" value="DeoC"/>
    <property type="match status" value="1"/>
</dbReference>
<dbReference type="SUPFAM" id="SSF51569">
    <property type="entry name" value="Aldolase"/>
    <property type="match status" value="1"/>
</dbReference>
<keyword id="KW-0423">Lactose metabolism</keyword>
<keyword id="KW-0456">Lyase</keyword>
<comment type="catalytic activity">
    <reaction evidence="1">
        <text>D-tagatofuranose 1,6-bisphosphate = D-glyceraldehyde 3-phosphate + dihydroxyacetone phosphate</text>
        <dbReference type="Rhea" id="RHEA:22948"/>
        <dbReference type="ChEBI" id="CHEBI:57642"/>
        <dbReference type="ChEBI" id="CHEBI:58694"/>
        <dbReference type="ChEBI" id="CHEBI:59776"/>
        <dbReference type="EC" id="4.1.2.40"/>
    </reaction>
</comment>
<comment type="pathway">
    <text evidence="1">Carbohydrate metabolism; D-tagatose 6-phosphate degradation; D-glyceraldehyde 3-phosphate and glycerone phosphate from D-tagatose 6-phosphate: step 2/2.</text>
</comment>
<comment type="similarity">
    <text evidence="1">Belongs to the aldolase LacD family.</text>
</comment>
<proteinExistence type="inferred from homology"/>